<protein>
    <recommendedName>
        <fullName evidence="1">Small ribosomal subunit protein bS6</fullName>
    </recommendedName>
    <alternativeName>
        <fullName evidence="2">30S ribosomal protein S6</fullName>
    </alternativeName>
</protein>
<dbReference type="EMBL" id="CP000932">
    <property type="protein sequence ID" value="ACM64275.1"/>
    <property type="molecule type" value="Genomic_DNA"/>
</dbReference>
<dbReference type="RefSeq" id="WP_012661658.1">
    <property type="nucleotide sequence ID" value="NC_012039.1"/>
</dbReference>
<dbReference type="SMR" id="B9KCI6"/>
<dbReference type="STRING" id="306263.Cla_0951"/>
<dbReference type="GeneID" id="93004991"/>
<dbReference type="KEGG" id="cla:CLA_0951"/>
<dbReference type="eggNOG" id="COG0360">
    <property type="taxonomic scope" value="Bacteria"/>
</dbReference>
<dbReference type="HOGENOM" id="CLU_113441_4_1_7"/>
<dbReference type="Proteomes" id="UP000007727">
    <property type="component" value="Chromosome"/>
</dbReference>
<dbReference type="GO" id="GO:0022627">
    <property type="term" value="C:cytosolic small ribosomal subunit"/>
    <property type="evidence" value="ECO:0007669"/>
    <property type="project" value="TreeGrafter"/>
</dbReference>
<dbReference type="GO" id="GO:0070181">
    <property type="term" value="F:small ribosomal subunit rRNA binding"/>
    <property type="evidence" value="ECO:0007669"/>
    <property type="project" value="TreeGrafter"/>
</dbReference>
<dbReference type="GO" id="GO:0003735">
    <property type="term" value="F:structural constituent of ribosome"/>
    <property type="evidence" value="ECO:0007669"/>
    <property type="project" value="InterPro"/>
</dbReference>
<dbReference type="GO" id="GO:0006412">
    <property type="term" value="P:translation"/>
    <property type="evidence" value="ECO:0007669"/>
    <property type="project" value="UniProtKB-UniRule"/>
</dbReference>
<dbReference type="CDD" id="cd00473">
    <property type="entry name" value="bS6"/>
    <property type="match status" value="1"/>
</dbReference>
<dbReference type="FunFam" id="3.30.70.60:FF:000010">
    <property type="entry name" value="30S ribosomal protein S6"/>
    <property type="match status" value="1"/>
</dbReference>
<dbReference type="Gene3D" id="3.30.70.60">
    <property type="match status" value="1"/>
</dbReference>
<dbReference type="HAMAP" id="MF_00360">
    <property type="entry name" value="Ribosomal_bS6"/>
    <property type="match status" value="1"/>
</dbReference>
<dbReference type="InterPro" id="IPR000529">
    <property type="entry name" value="Ribosomal_bS6"/>
</dbReference>
<dbReference type="InterPro" id="IPR035980">
    <property type="entry name" value="Ribosomal_bS6_sf"/>
</dbReference>
<dbReference type="InterPro" id="IPR020814">
    <property type="entry name" value="Ribosomal_S6_plastid/chlpt"/>
</dbReference>
<dbReference type="InterPro" id="IPR014717">
    <property type="entry name" value="Transl_elong_EF1B/ribsomal_bS6"/>
</dbReference>
<dbReference type="NCBIfam" id="TIGR00166">
    <property type="entry name" value="S6"/>
    <property type="match status" value="1"/>
</dbReference>
<dbReference type="PANTHER" id="PTHR21011">
    <property type="entry name" value="MITOCHONDRIAL 28S RIBOSOMAL PROTEIN S6"/>
    <property type="match status" value="1"/>
</dbReference>
<dbReference type="PANTHER" id="PTHR21011:SF1">
    <property type="entry name" value="SMALL RIBOSOMAL SUBUNIT PROTEIN BS6M"/>
    <property type="match status" value="1"/>
</dbReference>
<dbReference type="Pfam" id="PF01250">
    <property type="entry name" value="Ribosomal_S6"/>
    <property type="match status" value="1"/>
</dbReference>
<dbReference type="SUPFAM" id="SSF54995">
    <property type="entry name" value="Ribosomal protein S6"/>
    <property type="match status" value="1"/>
</dbReference>
<reference key="1">
    <citation type="journal article" date="2008" name="Foodborne Pathog. Dis.">
        <title>The complete genome sequence and analysis of the human pathogen Campylobacter lari.</title>
        <authorList>
            <person name="Miller W.G."/>
            <person name="Wang G."/>
            <person name="Binnewies T.T."/>
            <person name="Parker C.T."/>
        </authorList>
    </citation>
    <scope>NUCLEOTIDE SEQUENCE [LARGE SCALE GENOMIC DNA]</scope>
    <source>
        <strain>RM2100 / D67 / ATCC BAA-1060</strain>
    </source>
</reference>
<proteinExistence type="inferred from homology"/>
<name>RS6_CAMLR</name>
<organism>
    <name type="scientific">Campylobacter lari (strain RM2100 / D67 / ATCC BAA-1060)</name>
    <dbReference type="NCBI Taxonomy" id="306263"/>
    <lineage>
        <taxon>Bacteria</taxon>
        <taxon>Pseudomonadati</taxon>
        <taxon>Campylobacterota</taxon>
        <taxon>Epsilonproteobacteria</taxon>
        <taxon>Campylobacterales</taxon>
        <taxon>Campylobacteraceae</taxon>
        <taxon>Campylobacter</taxon>
    </lineage>
</organism>
<keyword id="KW-1185">Reference proteome</keyword>
<keyword id="KW-0687">Ribonucleoprotein</keyword>
<keyword id="KW-0689">Ribosomal protein</keyword>
<keyword id="KW-0694">RNA-binding</keyword>
<keyword id="KW-0699">rRNA-binding</keyword>
<comment type="function">
    <text evidence="1">Binds together with bS18 to 16S ribosomal RNA.</text>
</comment>
<comment type="similarity">
    <text evidence="1">Belongs to the bacterial ribosomal protein bS6 family.</text>
</comment>
<evidence type="ECO:0000255" key="1">
    <source>
        <dbReference type="HAMAP-Rule" id="MF_00360"/>
    </source>
</evidence>
<evidence type="ECO:0000305" key="2"/>
<gene>
    <name evidence="1" type="primary">rpsF</name>
    <name type="ordered locus">Cla_0951</name>
</gene>
<feature type="chain" id="PRO_1000133516" description="Small ribosomal subunit protein bS6">
    <location>
        <begin position="1"/>
        <end position="124"/>
    </location>
</feature>
<sequence>MRHYEVLFILKPTLTEEEVSAKLEFVKEVLTKNGAEIESVVPMGTRKLAYKIKKYERGTYFVIYFKAPTNLIAELERVLRITEEVIRFLIVKYENKKEIAAWEKLSKGIKQNKKEIKASESTEG</sequence>
<accession>B9KCI6</accession>